<feature type="chain" id="PRO_1000010073" description="DNA mismatch repair protein MutL">
    <location>
        <begin position="1"/>
        <end position="618"/>
    </location>
</feature>
<feature type="region of interest" description="Disordered" evidence="2">
    <location>
        <begin position="367"/>
        <end position="402"/>
    </location>
</feature>
<feature type="compositionally biased region" description="Gly residues" evidence="2">
    <location>
        <begin position="382"/>
        <end position="392"/>
    </location>
</feature>
<protein>
    <recommendedName>
        <fullName evidence="1">DNA mismatch repair protein MutL</fullName>
    </recommendedName>
</protein>
<gene>
    <name evidence="1" type="primary">mutL</name>
    <name type="ordered locus">SPA4176</name>
</gene>
<proteinExistence type="inferred from homology"/>
<accession>Q5PL49</accession>
<sequence length="618" mass="67805">MPIQVLPPQLANQIAAGEVVERPASVVKELVENSLDAGATRVDIDIERGGAKLIRIRDNGCGIKKEELALALARHATSKIASLDDLEAIISLGFRGEALASISSVSRLTLTSRTAEQAEAWQAYAEGRDMDVTVKPAAHPVGTTLEVLDLFYNTPARRKFMRTEKTEFNHIDEIIRRIALARFDVTLNLSHNGKLVRQYRAVAKDGQKERRLGAICGTPFLEQALAIEWQHGDLTLRGWVADPNHTTTALTEIQYCYVNGRMMRDRLINHAIRQACEDKLGADQQPAFVLYLEIDPHQVDVNVHPAKHEVRFHQSRLVHDFIYQGVLSVLQQQTETTLPLEEIAPAPRHVPENRIAAGRNHFAVPAEPTTAREPATPRYSGGASGGNGGRQTAGGWPHAQPGYQKQQGEVYRALLQTPTTSPAPEAVAPALDGHSQSFGRVLTIVCGDCALLEHAGTIQLLSLPVAERWLRQAQLTPGQSPVCAQPLLIPLRLKVSADEKAALQKAQSLLGELGIEFQSDAQHVTIRAVPLPLRQQNLQILIPELIGYLAQQTTFATVNIAQWIARNVQSEHPQWSMAQAISLLADVERLCPQLVKAPPGGLLQPVDLHSAMNALKHE</sequence>
<reference key="1">
    <citation type="journal article" date="2004" name="Nat. Genet.">
        <title>Comparison of genome degradation in Paratyphi A and Typhi, human-restricted serovars of Salmonella enterica that cause typhoid.</title>
        <authorList>
            <person name="McClelland M."/>
            <person name="Sanderson K.E."/>
            <person name="Clifton S.W."/>
            <person name="Latreille P."/>
            <person name="Porwollik S."/>
            <person name="Sabo A."/>
            <person name="Meyer R."/>
            <person name="Bieri T."/>
            <person name="Ozersky P."/>
            <person name="McLellan M."/>
            <person name="Harkins C.R."/>
            <person name="Wang C."/>
            <person name="Nguyen C."/>
            <person name="Berghoff A."/>
            <person name="Elliott G."/>
            <person name="Kohlberg S."/>
            <person name="Strong C."/>
            <person name="Du F."/>
            <person name="Carter J."/>
            <person name="Kremizki C."/>
            <person name="Layman D."/>
            <person name="Leonard S."/>
            <person name="Sun H."/>
            <person name="Fulton L."/>
            <person name="Nash W."/>
            <person name="Miner T."/>
            <person name="Minx P."/>
            <person name="Delehaunty K."/>
            <person name="Fronick C."/>
            <person name="Magrini V."/>
            <person name="Nhan M."/>
            <person name="Warren W."/>
            <person name="Florea L."/>
            <person name="Spieth J."/>
            <person name="Wilson R.K."/>
        </authorList>
    </citation>
    <scope>NUCLEOTIDE SEQUENCE [LARGE SCALE GENOMIC DNA]</scope>
    <source>
        <strain>ATCC 9150 / SARB42</strain>
    </source>
</reference>
<dbReference type="EMBL" id="CP000026">
    <property type="protein sequence ID" value="AAV79913.1"/>
    <property type="molecule type" value="Genomic_DNA"/>
</dbReference>
<dbReference type="RefSeq" id="WP_001122565.1">
    <property type="nucleotide sequence ID" value="NC_006511.1"/>
</dbReference>
<dbReference type="SMR" id="Q5PL49"/>
<dbReference type="KEGG" id="spt:SPA4176"/>
<dbReference type="HOGENOM" id="CLU_004131_5_1_6"/>
<dbReference type="Proteomes" id="UP000008185">
    <property type="component" value="Chromosome"/>
</dbReference>
<dbReference type="GO" id="GO:0032300">
    <property type="term" value="C:mismatch repair complex"/>
    <property type="evidence" value="ECO:0007669"/>
    <property type="project" value="InterPro"/>
</dbReference>
<dbReference type="GO" id="GO:0005524">
    <property type="term" value="F:ATP binding"/>
    <property type="evidence" value="ECO:0007669"/>
    <property type="project" value="InterPro"/>
</dbReference>
<dbReference type="GO" id="GO:0016887">
    <property type="term" value="F:ATP hydrolysis activity"/>
    <property type="evidence" value="ECO:0007669"/>
    <property type="project" value="InterPro"/>
</dbReference>
<dbReference type="GO" id="GO:0140664">
    <property type="term" value="F:ATP-dependent DNA damage sensor activity"/>
    <property type="evidence" value="ECO:0007669"/>
    <property type="project" value="InterPro"/>
</dbReference>
<dbReference type="GO" id="GO:0030983">
    <property type="term" value="F:mismatched DNA binding"/>
    <property type="evidence" value="ECO:0007669"/>
    <property type="project" value="InterPro"/>
</dbReference>
<dbReference type="GO" id="GO:0006298">
    <property type="term" value="P:mismatch repair"/>
    <property type="evidence" value="ECO:0007669"/>
    <property type="project" value="UniProtKB-UniRule"/>
</dbReference>
<dbReference type="CDD" id="cd16926">
    <property type="entry name" value="HATPase_MutL-MLH-PMS-like"/>
    <property type="match status" value="1"/>
</dbReference>
<dbReference type="CDD" id="cd03482">
    <property type="entry name" value="MutL_Trans_MutL"/>
    <property type="match status" value="1"/>
</dbReference>
<dbReference type="FunFam" id="3.30.230.10:FF:000013">
    <property type="entry name" value="DNA mismatch repair endonuclease MutL"/>
    <property type="match status" value="1"/>
</dbReference>
<dbReference type="FunFam" id="3.30.565.10:FF:000003">
    <property type="entry name" value="DNA mismatch repair endonuclease MutL"/>
    <property type="match status" value="1"/>
</dbReference>
<dbReference type="FunFam" id="3.30.1370.100:FF:000002">
    <property type="entry name" value="DNA mismatch repair protein MutL"/>
    <property type="match status" value="1"/>
</dbReference>
<dbReference type="Gene3D" id="3.30.230.10">
    <property type="match status" value="1"/>
</dbReference>
<dbReference type="Gene3D" id="3.30.565.10">
    <property type="entry name" value="Histidine kinase-like ATPase, C-terminal domain"/>
    <property type="match status" value="1"/>
</dbReference>
<dbReference type="Gene3D" id="3.30.1540.20">
    <property type="entry name" value="MutL, C-terminal domain, dimerisation subdomain"/>
    <property type="match status" value="1"/>
</dbReference>
<dbReference type="Gene3D" id="3.30.1370.100">
    <property type="entry name" value="MutL, C-terminal domain, regulatory subdomain"/>
    <property type="match status" value="1"/>
</dbReference>
<dbReference type="HAMAP" id="MF_00149">
    <property type="entry name" value="DNA_mis_repair"/>
    <property type="match status" value="1"/>
</dbReference>
<dbReference type="InterPro" id="IPR014762">
    <property type="entry name" value="DNA_mismatch_repair_CS"/>
</dbReference>
<dbReference type="InterPro" id="IPR020667">
    <property type="entry name" value="DNA_mismatch_repair_MutL"/>
</dbReference>
<dbReference type="InterPro" id="IPR013507">
    <property type="entry name" value="DNA_mismatch_S5_2-like"/>
</dbReference>
<dbReference type="InterPro" id="IPR036890">
    <property type="entry name" value="HATPase_C_sf"/>
</dbReference>
<dbReference type="InterPro" id="IPR002099">
    <property type="entry name" value="MutL/Mlh/PMS"/>
</dbReference>
<dbReference type="InterPro" id="IPR038973">
    <property type="entry name" value="MutL/Mlh/Pms-like"/>
</dbReference>
<dbReference type="InterPro" id="IPR014790">
    <property type="entry name" value="MutL_C"/>
</dbReference>
<dbReference type="InterPro" id="IPR042120">
    <property type="entry name" value="MutL_C_dimsub"/>
</dbReference>
<dbReference type="InterPro" id="IPR042121">
    <property type="entry name" value="MutL_C_regsub"/>
</dbReference>
<dbReference type="InterPro" id="IPR037198">
    <property type="entry name" value="MutL_C_sf"/>
</dbReference>
<dbReference type="InterPro" id="IPR020568">
    <property type="entry name" value="Ribosomal_Su5_D2-typ_SF"/>
</dbReference>
<dbReference type="InterPro" id="IPR014721">
    <property type="entry name" value="Ribsml_uS5_D2-typ_fold_subgr"/>
</dbReference>
<dbReference type="NCBIfam" id="TIGR00585">
    <property type="entry name" value="mutl"/>
    <property type="match status" value="1"/>
</dbReference>
<dbReference type="NCBIfam" id="NF000948">
    <property type="entry name" value="PRK00095.1-1"/>
    <property type="match status" value="1"/>
</dbReference>
<dbReference type="PANTHER" id="PTHR10073">
    <property type="entry name" value="DNA MISMATCH REPAIR PROTEIN MLH, PMS, MUTL"/>
    <property type="match status" value="1"/>
</dbReference>
<dbReference type="PANTHER" id="PTHR10073:SF12">
    <property type="entry name" value="DNA MISMATCH REPAIR PROTEIN MLH1"/>
    <property type="match status" value="1"/>
</dbReference>
<dbReference type="Pfam" id="PF01119">
    <property type="entry name" value="DNA_mis_repair"/>
    <property type="match status" value="1"/>
</dbReference>
<dbReference type="Pfam" id="PF13589">
    <property type="entry name" value="HATPase_c_3"/>
    <property type="match status" value="1"/>
</dbReference>
<dbReference type="Pfam" id="PF08676">
    <property type="entry name" value="MutL_C"/>
    <property type="match status" value="1"/>
</dbReference>
<dbReference type="SMART" id="SM01340">
    <property type="entry name" value="DNA_mis_repair"/>
    <property type="match status" value="1"/>
</dbReference>
<dbReference type="SMART" id="SM00853">
    <property type="entry name" value="MutL_C"/>
    <property type="match status" value="1"/>
</dbReference>
<dbReference type="SUPFAM" id="SSF55874">
    <property type="entry name" value="ATPase domain of HSP90 chaperone/DNA topoisomerase II/histidine kinase"/>
    <property type="match status" value="1"/>
</dbReference>
<dbReference type="SUPFAM" id="SSF118116">
    <property type="entry name" value="DNA mismatch repair protein MutL"/>
    <property type="match status" value="1"/>
</dbReference>
<dbReference type="SUPFAM" id="SSF54211">
    <property type="entry name" value="Ribosomal protein S5 domain 2-like"/>
    <property type="match status" value="1"/>
</dbReference>
<dbReference type="PROSITE" id="PS00058">
    <property type="entry name" value="DNA_MISMATCH_REPAIR_1"/>
    <property type="match status" value="1"/>
</dbReference>
<evidence type="ECO:0000255" key="1">
    <source>
        <dbReference type="HAMAP-Rule" id="MF_00149"/>
    </source>
</evidence>
<evidence type="ECO:0000256" key="2">
    <source>
        <dbReference type="SAM" id="MobiDB-lite"/>
    </source>
</evidence>
<comment type="function">
    <text evidence="1">This protein is involved in the repair of mismatches in DNA. It is required for dam-dependent methyl-directed DNA mismatch repair. May act as a 'molecular matchmaker', a protein that promotes the formation of a stable complex between two or more DNA-binding proteins in an ATP-dependent manner without itself being part of a final effector complex.</text>
</comment>
<comment type="similarity">
    <text evidence="1">Belongs to the DNA mismatch repair MutL/HexB family.</text>
</comment>
<organism>
    <name type="scientific">Salmonella paratyphi A (strain ATCC 9150 / SARB42)</name>
    <dbReference type="NCBI Taxonomy" id="295319"/>
    <lineage>
        <taxon>Bacteria</taxon>
        <taxon>Pseudomonadati</taxon>
        <taxon>Pseudomonadota</taxon>
        <taxon>Gammaproteobacteria</taxon>
        <taxon>Enterobacterales</taxon>
        <taxon>Enterobacteriaceae</taxon>
        <taxon>Salmonella</taxon>
    </lineage>
</organism>
<keyword id="KW-0227">DNA damage</keyword>
<keyword id="KW-0234">DNA repair</keyword>
<name>MUTL_SALPA</name>